<evidence type="ECO:0000250" key="1"/>
<evidence type="ECO:0000255" key="2"/>
<evidence type="ECO:0000255" key="3">
    <source>
        <dbReference type="PROSITE-ProRule" id="PRU01058"/>
    </source>
</evidence>
<evidence type="ECO:0000256" key="4">
    <source>
        <dbReference type="SAM" id="MobiDB-lite"/>
    </source>
</evidence>
<feature type="transit peptide" description="Mitochondrion" evidence="2">
    <location>
        <begin position="1"/>
        <end position="48"/>
    </location>
</feature>
<feature type="chain" id="PRO_0000409640" description="Genetic interactor of prohibitins 3, mitochondrial">
    <location>
        <begin position="49"/>
        <end position="676"/>
    </location>
</feature>
<feature type="domain" description="CP-type G" evidence="3">
    <location>
        <begin position="180"/>
        <end position="395"/>
    </location>
</feature>
<feature type="region of interest" description="Disordered" evidence="4">
    <location>
        <begin position="98"/>
        <end position="117"/>
    </location>
</feature>
<feature type="compositionally biased region" description="Basic and acidic residues" evidence="4">
    <location>
        <begin position="98"/>
        <end position="110"/>
    </location>
</feature>
<accession>A3GEW8</accession>
<sequence>MIRYSGFSVVRSCLSRTFSRNNSALSTAITSSLLTNLFPTCKSCGVRLQSSDPKGPGYYILEESKPAKRFVKSEDQVFAKYVNDLSLEDKKLLINEDSKKVSDSESRSESQDLSNEADIDSSLVNSLGNKDYYASEIKKVSQKDKFKLEEKYNDSVECVRCRDATYRSNFKNFSQQEYPLELLDNIMSRIPPHEQIVYIVNAQDFPMSINPKIFQYRSSNELKFIVNKADLLFKSINLSKNYGQTFFSDYLFHKYRVPKENVMVVSGTNYWDFDKVLDFVDDNSYLIGNVNCGKSTIIKGMLYTIDKSNKRKKFMSSRERTKMEKEQDMLINRASRMKAMTAGEKKKEKKRYEMLFRSKVGPGVSHIPGFTRGFIQIDLEDMDKTIYDVPGFVNSENQLIHHHDIYNKISSPKILKQIHKGVKVYDKGTYTSKYITAKGGQSLTIGGLFFLNFPQKSMYQLRNCINHDFHLFSNFSRAVYISSNLSKYPGMGSKFFIEHDDSSLKELRRFIIPPFHGSIDLVIQNLGHINIKPTGRKETNQPLILYLPPGVEAIIRLPITNYIAKTFTGRDAKGNPLRKENILTKGVLALQRYTAKYPFYSTLISANKGAEVSSELALILKSEATCEPVTDAEQERLVKQDFARIGEWATIARGVECNYNERTVVDERNKFDYWME</sequence>
<dbReference type="EMBL" id="AAVQ01000001">
    <property type="protein sequence ID" value="EAZ63239.2"/>
    <property type="molecule type" value="Genomic_DNA"/>
</dbReference>
<dbReference type="RefSeq" id="XP_001387262.2">
    <property type="nucleotide sequence ID" value="XM_001387225.1"/>
</dbReference>
<dbReference type="FunCoup" id="A3GEW8">
    <property type="interactions" value="86"/>
</dbReference>
<dbReference type="STRING" id="322104.A3GEW8"/>
<dbReference type="GeneID" id="4850817"/>
<dbReference type="KEGG" id="pic:PICST_28031"/>
<dbReference type="eggNOG" id="ENOG502S0UP">
    <property type="taxonomic scope" value="Eukaryota"/>
</dbReference>
<dbReference type="HOGENOM" id="CLU_025792_0_0_1"/>
<dbReference type="InParanoid" id="A3GEW8"/>
<dbReference type="OMA" id="IIPPFYG"/>
<dbReference type="OrthoDB" id="1696305at2759"/>
<dbReference type="Proteomes" id="UP000002258">
    <property type="component" value="Chromosome 1"/>
</dbReference>
<dbReference type="GO" id="GO:0005739">
    <property type="term" value="C:mitochondrion"/>
    <property type="evidence" value="ECO:0007669"/>
    <property type="project" value="UniProtKB-SubCell"/>
</dbReference>
<dbReference type="GO" id="GO:0005525">
    <property type="term" value="F:GTP binding"/>
    <property type="evidence" value="ECO:0007669"/>
    <property type="project" value="InterPro"/>
</dbReference>
<dbReference type="Gene3D" id="3.40.50.300">
    <property type="entry name" value="P-loop containing nucleotide triphosphate hydrolases"/>
    <property type="match status" value="1"/>
</dbReference>
<dbReference type="InterPro" id="IPR030378">
    <property type="entry name" value="G_CP_dom"/>
</dbReference>
<dbReference type="InterPro" id="IPR050896">
    <property type="entry name" value="Mito_lipid_metab_GTPase"/>
</dbReference>
<dbReference type="InterPro" id="IPR027417">
    <property type="entry name" value="P-loop_NTPase"/>
</dbReference>
<dbReference type="PANTHER" id="PTHR46434">
    <property type="entry name" value="GENETIC INTERACTOR OF PROHIBITINS 3, MITOCHONDRIAL"/>
    <property type="match status" value="1"/>
</dbReference>
<dbReference type="PANTHER" id="PTHR46434:SF1">
    <property type="entry name" value="GENETIC INTERACTOR OF PROHIBITINS 3, MITOCHONDRIAL"/>
    <property type="match status" value="1"/>
</dbReference>
<dbReference type="SUPFAM" id="SSF52540">
    <property type="entry name" value="P-loop containing nucleoside triphosphate hydrolases"/>
    <property type="match status" value="1"/>
</dbReference>
<dbReference type="PROSITE" id="PS51721">
    <property type="entry name" value="G_CP"/>
    <property type="match status" value="1"/>
</dbReference>
<keyword id="KW-0496">Mitochondrion</keyword>
<keyword id="KW-1185">Reference proteome</keyword>
<keyword id="KW-0809">Transit peptide</keyword>
<gene>
    <name type="primary">GEP3</name>
    <name type="synonym">FMP48</name>
    <name type="ORF">PICST_28031</name>
</gene>
<protein>
    <recommendedName>
        <fullName>Genetic interactor of prohibitins 3, mitochondrial</fullName>
    </recommendedName>
    <alternativeName>
        <fullName>Found in mitochondrial proteome protein 38</fullName>
    </alternativeName>
</protein>
<proteinExistence type="inferred from homology"/>
<reference key="1">
    <citation type="journal article" date="2007" name="Nat. Biotechnol.">
        <title>Genome sequence of the lignocellulose-bioconverting and xylose-fermenting yeast Pichia stipitis.</title>
        <authorList>
            <person name="Jeffries T.W."/>
            <person name="Grigoriev I.V."/>
            <person name="Grimwood J."/>
            <person name="Laplaza J.M."/>
            <person name="Aerts A."/>
            <person name="Salamov A."/>
            <person name="Schmutz J."/>
            <person name="Lindquist E."/>
            <person name="Dehal P."/>
            <person name="Shapiro H."/>
            <person name="Jin Y.-S."/>
            <person name="Passoth V."/>
            <person name="Richardson P.M."/>
        </authorList>
    </citation>
    <scope>NUCLEOTIDE SEQUENCE [LARGE SCALE GENOMIC DNA]</scope>
    <source>
        <strain>ATCC 58785 / CBS 6054 / NBRC 10063 / NRRL Y-11545</strain>
    </source>
</reference>
<organism>
    <name type="scientific">Scheffersomyces stipitis (strain ATCC 58785 / CBS 6054 / NBRC 10063 / NRRL Y-11545)</name>
    <name type="common">Yeast</name>
    <name type="synonym">Pichia stipitis</name>
    <dbReference type="NCBI Taxonomy" id="322104"/>
    <lineage>
        <taxon>Eukaryota</taxon>
        <taxon>Fungi</taxon>
        <taxon>Dikarya</taxon>
        <taxon>Ascomycota</taxon>
        <taxon>Saccharomycotina</taxon>
        <taxon>Pichiomycetes</taxon>
        <taxon>Debaryomycetaceae</taxon>
        <taxon>Scheffersomyces</taxon>
    </lineage>
</organism>
<name>GEP3_PICST</name>
<comment type="function">
    <text evidence="1">May be involved in the mitochondrial lipid metabolism.</text>
</comment>
<comment type="subcellular location">
    <subcellularLocation>
        <location evidence="1">Mitochondrion</location>
    </subcellularLocation>
</comment>
<comment type="similarity">
    <text evidence="3">Belongs to the TRAFAC class YlqF/YawG GTPase family. GEP3 subfamily.</text>
</comment>